<proteinExistence type="inferred from homology"/>
<protein>
    <recommendedName>
        <fullName>Probable pectate lyase C</fullName>
        <ecNumber>4.2.2.2</ecNumber>
    </recommendedName>
</protein>
<reference key="1">
    <citation type="submission" date="2005-09" db="EMBL/GenBank/DDBJ databases">
        <title>Annotation of the Aspergillus terreus NIH2624 genome.</title>
        <authorList>
            <person name="Birren B.W."/>
            <person name="Lander E.S."/>
            <person name="Galagan J.E."/>
            <person name="Nusbaum C."/>
            <person name="Devon K."/>
            <person name="Henn M."/>
            <person name="Ma L.-J."/>
            <person name="Jaffe D.B."/>
            <person name="Butler J."/>
            <person name="Alvarez P."/>
            <person name="Gnerre S."/>
            <person name="Grabherr M."/>
            <person name="Kleber M."/>
            <person name="Mauceli E.W."/>
            <person name="Brockman W."/>
            <person name="Rounsley S."/>
            <person name="Young S.K."/>
            <person name="LaButti K."/>
            <person name="Pushparaj V."/>
            <person name="DeCaprio D."/>
            <person name="Crawford M."/>
            <person name="Koehrsen M."/>
            <person name="Engels R."/>
            <person name="Montgomery P."/>
            <person name="Pearson M."/>
            <person name="Howarth C."/>
            <person name="Larson L."/>
            <person name="Luoma S."/>
            <person name="White J."/>
            <person name="Alvarado L."/>
            <person name="Kodira C.D."/>
            <person name="Zeng Q."/>
            <person name="Oleary S."/>
            <person name="Yandava C."/>
            <person name="Denning D.W."/>
            <person name="Nierman W.C."/>
            <person name="Milne T."/>
            <person name="Madden K."/>
        </authorList>
    </citation>
    <scope>NUCLEOTIDE SEQUENCE [LARGE SCALE GENOMIC DNA]</scope>
    <source>
        <strain>NIH 2624 / FGSC A1156</strain>
    </source>
</reference>
<evidence type="ECO:0000250" key="1"/>
<evidence type="ECO:0000255" key="2"/>
<evidence type="ECO:0000255" key="3">
    <source>
        <dbReference type="PROSITE-ProRule" id="PRU10142"/>
    </source>
</evidence>
<evidence type="ECO:0000256" key="4">
    <source>
        <dbReference type="SAM" id="MobiDB-lite"/>
    </source>
</evidence>
<evidence type="ECO:0000305" key="5"/>
<dbReference type="EC" id="4.2.2.2"/>
<dbReference type="EMBL" id="CH476600">
    <property type="protein sequence ID" value="EAU34536.1"/>
    <property type="molecule type" value="Genomic_DNA"/>
</dbReference>
<dbReference type="RefSeq" id="XP_001214645.1">
    <property type="nucleotide sequence ID" value="XM_001214645.1"/>
</dbReference>
<dbReference type="SMR" id="Q0CLG7"/>
<dbReference type="STRING" id="341663.Q0CLG7"/>
<dbReference type="GlyCosmos" id="Q0CLG7">
    <property type="glycosylation" value="3 sites, No reported glycans"/>
</dbReference>
<dbReference type="EnsemblFungi" id="EAU34536">
    <property type="protein sequence ID" value="EAU34536"/>
    <property type="gene ID" value="ATEG_05467"/>
</dbReference>
<dbReference type="GeneID" id="4320816"/>
<dbReference type="VEuPathDB" id="FungiDB:ATEG_05467"/>
<dbReference type="eggNOG" id="ENOG502QW7I">
    <property type="taxonomic scope" value="Eukaryota"/>
</dbReference>
<dbReference type="HOGENOM" id="CLU_016764_1_1_1"/>
<dbReference type="OMA" id="GIHSMGT"/>
<dbReference type="OrthoDB" id="302705at2759"/>
<dbReference type="Proteomes" id="UP000007963">
    <property type="component" value="Unassembled WGS sequence"/>
</dbReference>
<dbReference type="GO" id="GO:0005576">
    <property type="term" value="C:extracellular region"/>
    <property type="evidence" value="ECO:0007669"/>
    <property type="project" value="UniProtKB-SubCell"/>
</dbReference>
<dbReference type="GO" id="GO:0046872">
    <property type="term" value="F:metal ion binding"/>
    <property type="evidence" value="ECO:0007669"/>
    <property type="project" value="UniProtKB-KW"/>
</dbReference>
<dbReference type="GO" id="GO:0030570">
    <property type="term" value="F:pectate lyase activity"/>
    <property type="evidence" value="ECO:0007669"/>
    <property type="project" value="UniProtKB-EC"/>
</dbReference>
<dbReference type="GO" id="GO:0071555">
    <property type="term" value="P:cell wall organization"/>
    <property type="evidence" value="ECO:0007669"/>
    <property type="project" value="UniProtKB-KW"/>
</dbReference>
<dbReference type="GO" id="GO:0000272">
    <property type="term" value="P:polysaccharide catabolic process"/>
    <property type="evidence" value="ECO:0007669"/>
    <property type="project" value="UniProtKB-KW"/>
</dbReference>
<dbReference type="Gene3D" id="2.160.20.10">
    <property type="entry name" value="Single-stranded right-handed beta-helix, Pectin lyase-like"/>
    <property type="match status" value="1"/>
</dbReference>
<dbReference type="InterPro" id="IPR018247">
    <property type="entry name" value="EF_Hand_1_Ca_BS"/>
</dbReference>
<dbReference type="InterPro" id="IPR012334">
    <property type="entry name" value="Pectin_lyas_fold"/>
</dbReference>
<dbReference type="InterPro" id="IPR011050">
    <property type="entry name" value="Pectin_lyase_fold/virulence"/>
</dbReference>
<dbReference type="InterPro" id="IPR052063">
    <property type="entry name" value="Polysaccharide_Lyase_1"/>
</dbReference>
<dbReference type="PANTHER" id="PTHR42970">
    <property type="entry name" value="PECTATE LYASE C-RELATED"/>
    <property type="match status" value="1"/>
</dbReference>
<dbReference type="PANTHER" id="PTHR42970:SF1">
    <property type="entry name" value="PECTATE LYASE C-RELATED"/>
    <property type="match status" value="1"/>
</dbReference>
<dbReference type="SUPFAM" id="SSF51126">
    <property type="entry name" value="Pectin lyase-like"/>
    <property type="match status" value="1"/>
</dbReference>
<dbReference type="PROSITE" id="PS00018">
    <property type="entry name" value="EF_HAND_1"/>
    <property type="match status" value="1"/>
</dbReference>
<accession>Q0CLG7</accession>
<comment type="function">
    <text evidence="1">Pectinolytic enzyme consist of four classes of enzymes: pectin lyase, polygalacturonase, pectin methylesterase and rhamnogalacturonase. Among pectinolytic enzymes, pectin lyase is the most important in depolymerization of pectin, since it cleaves internal glycosidic bonds of highly methylated pectins. Favors pectate, the anion, over pectin, the methyl ester (By similarity).</text>
</comment>
<comment type="catalytic activity">
    <reaction>
        <text>Eliminative cleavage of (1-&gt;4)-alpha-D-galacturonan to give oligosaccharides with 4-deoxy-alpha-D-galact-4-enuronosyl groups at their non-reducing ends.</text>
        <dbReference type="EC" id="4.2.2.2"/>
    </reaction>
</comment>
<comment type="cofactor">
    <cofactor evidence="1">
        <name>Ca(2+)</name>
        <dbReference type="ChEBI" id="CHEBI:29108"/>
    </cofactor>
    <text evidence="1">Binds 1 Ca(2+) ion per subunit.</text>
</comment>
<comment type="subcellular location">
    <subcellularLocation>
        <location evidence="1">Secreted</location>
    </subcellularLocation>
</comment>
<comment type="similarity">
    <text evidence="5">Belongs to the polysaccharide lyase 1 family.</text>
</comment>
<keyword id="KW-0106">Calcium</keyword>
<keyword id="KW-0119">Carbohydrate metabolism</keyword>
<keyword id="KW-0961">Cell wall biogenesis/degradation</keyword>
<keyword id="KW-0325">Glycoprotein</keyword>
<keyword id="KW-0456">Lyase</keyword>
<keyword id="KW-0479">Metal-binding</keyword>
<keyword id="KW-0624">Polysaccharide degradation</keyword>
<keyword id="KW-1185">Reference proteome</keyword>
<keyword id="KW-0964">Secreted</keyword>
<keyword id="KW-0732">Signal</keyword>
<gene>
    <name type="primary">plyC</name>
    <name type="ORF">ATEG_05467</name>
</gene>
<name>PLYC_ASPTN</name>
<organism>
    <name type="scientific">Aspergillus terreus (strain NIH 2624 / FGSC A1156)</name>
    <dbReference type="NCBI Taxonomy" id="341663"/>
    <lineage>
        <taxon>Eukaryota</taxon>
        <taxon>Fungi</taxon>
        <taxon>Dikarya</taxon>
        <taxon>Ascomycota</taxon>
        <taxon>Pezizomycotina</taxon>
        <taxon>Eurotiomycetes</taxon>
        <taxon>Eurotiomycetidae</taxon>
        <taxon>Eurotiales</taxon>
        <taxon>Aspergillaceae</taxon>
        <taxon>Aspergillus</taxon>
        <taxon>Aspergillus subgen. Circumdati</taxon>
    </lineage>
</organism>
<feature type="signal peptide" evidence="2">
    <location>
        <begin position="1"/>
        <end position="19"/>
    </location>
</feature>
<feature type="chain" id="PRO_0000394572" description="Probable pectate lyase C">
    <location>
        <begin position="20"/>
        <end position="419"/>
    </location>
</feature>
<feature type="domain" description="EF-hand">
    <location>
        <begin position="261"/>
        <end position="296"/>
    </location>
</feature>
<feature type="region of interest" description="Disordered" evidence="4">
    <location>
        <begin position="350"/>
        <end position="395"/>
    </location>
</feature>
<feature type="compositionally biased region" description="Acidic residues" evidence="4">
    <location>
        <begin position="373"/>
        <end position="386"/>
    </location>
</feature>
<feature type="active site" evidence="2">
    <location>
        <position position="204"/>
    </location>
</feature>
<feature type="binding site" evidence="3">
    <location>
        <position position="274"/>
    </location>
    <ligand>
        <name>Ca(2+)</name>
        <dbReference type="ChEBI" id="CHEBI:29108"/>
    </ligand>
</feature>
<feature type="binding site" evidence="3">
    <location>
        <position position="276"/>
    </location>
    <ligand>
        <name>Ca(2+)</name>
        <dbReference type="ChEBI" id="CHEBI:29108"/>
    </ligand>
</feature>
<feature type="binding site" evidence="3">
    <location>
        <position position="278"/>
    </location>
    <ligand>
        <name>Ca(2+)</name>
        <dbReference type="ChEBI" id="CHEBI:29108"/>
    </ligand>
</feature>
<feature type="binding site" evidence="3">
    <location>
        <position position="280"/>
    </location>
    <ligand>
        <name>Ca(2+)</name>
        <dbReference type="ChEBI" id="CHEBI:29108"/>
    </ligand>
</feature>
<feature type="binding site" evidence="3">
    <location>
        <position position="285"/>
    </location>
    <ligand>
        <name>Ca(2+)</name>
        <dbReference type="ChEBI" id="CHEBI:29108"/>
    </ligand>
</feature>
<feature type="glycosylation site" description="N-linked (GlcNAc...) asparagine" evidence="2">
    <location>
        <position position="48"/>
    </location>
</feature>
<feature type="glycosylation site" description="N-linked (GlcNAc...) asparagine" evidence="2">
    <location>
        <position position="164"/>
    </location>
</feature>
<feature type="glycosylation site" description="N-linked (GlcNAc...) asparagine" evidence="2">
    <location>
        <position position="201"/>
    </location>
</feature>
<sequence length="419" mass="44106">MRLGIALFSLIGLCHSVSALIAFPGAEGFGANAVGGRQGEIYVVTNLNDSGEGSLRDAVSATDRIVVFAVGGVIEISDRIVVSKRVTILGQTAPGDGITVYGNGWSFSNADDAIVRYIRIRMGKVGDSGKDAITIAEGSTMIFDHVSVSWGRDETFSISGTASNITIQNTIIAQGLETHSCGGLIQTGGGVSLFRNLYIDNKTRNPKVKGVNDFTNNVVYNWGGGGGYIAGDSSGDSYANIIGNYFISGPSTSVTAFTRGNEYFHGYVETNYYDPDRDGTLNGNELGVSASNYGGMALVDTKYDYPAVEYQMTPGEAVNYVTGYVGASKVRDSVDTQLIAQVKSWGTKGELISDEASMGGPGDLDGGSPPTDSDGDGIPDDAETEIGSDPNTADSMELHSSGYTYVEMWANSLVPSSYH</sequence>